<reference key="1">
    <citation type="journal article" date="2005" name="Nucleic Acids Res.">
        <title>Genomic blueprint of Hahella chejuensis, a marine microbe producing an algicidal agent.</title>
        <authorList>
            <person name="Jeong H."/>
            <person name="Yim J.H."/>
            <person name="Lee C."/>
            <person name="Choi S.-H."/>
            <person name="Park Y.K."/>
            <person name="Yoon S.H."/>
            <person name="Hur C.-G."/>
            <person name="Kang H.-Y."/>
            <person name="Kim D."/>
            <person name="Lee H.H."/>
            <person name="Park K.H."/>
            <person name="Park S.-H."/>
            <person name="Park H.-S."/>
            <person name="Lee H.K."/>
            <person name="Oh T.K."/>
            <person name="Kim J.F."/>
        </authorList>
    </citation>
    <scope>NUCLEOTIDE SEQUENCE [LARGE SCALE GENOMIC DNA]</scope>
    <source>
        <strain>KCTC 2396</strain>
    </source>
</reference>
<protein>
    <recommendedName>
        <fullName evidence="1">ATP-dependent Clp protease ATP-binding subunit ClpX</fullName>
    </recommendedName>
</protein>
<dbReference type="EMBL" id="CP000155">
    <property type="protein sequence ID" value="ABC28989.1"/>
    <property type="molecule type" value="Genomic_DNA"/>
</dbReference>
<dbReference type="RefSeq" id="WP_011396059.1">
    <property type="nucleotide sequence ID" value="NC_007645.1"/>
</dbReference>
<dbReference type="SMR" id="Q2SK35"/>
<dbReference type="STRING" id="349521.HCH_02160"/>
<dbReference type="KEGG" id="hch:HCH_02160"/>
<dbReference type="eggNOG" id="COG1219">
    <property type="taxonomic scope" value="Bacteria"/>
</dbReference>
<dbReference type="HOGENOM" id="CLU_014218_8_2_6"/>
<dbReference type="OrthoDB" id="9804062at2"/>
<dbReference type="Proteomes" id="UP000000238">
    <property type="component" value="Chromosome"/>
</dbReference>
<dbReference type="GO" id="GO:0009376">
    <property type="term" value="C:HslUV protease complex"/>
    <property type="evidence" value="ECO:0007669"/>
    <property type="project" value="TreeGrafter"/>
</dbReference>
<dbReference type="GO" id="GO:0005524">
    <property type="term" value="F:ATP binding"/>
    <property type="evidence" value="ECO:0007669"/>
    <property type="project" value="UniProtKB-UniRule"/>
</dbReference>
<dbReference type="GO" id="GO:0016887">
    <property type="term" value="F:ATP hydrolysis activity"/>
    <property type="evidence" value="ECO:0007669"/>
    <property type="project" value="InterPro"/>
</dbReference>
<dbReference type="GO" id="GO:0140662">
    <property type="term" value="F:ATP-dependent protein folding chaperone"/>
    <property type="evidence" value="ECO:0007669"/>
    <property type="project" value="InterPro"/>
</dbReference>
<dbReference type="GO" id="GO:0046983">
    <property type="term" value="F:protein dimerization activity"/>
    <property type="evidence" value="ECO:0007669"/>
    <property type="project" value="InterPro"/>
</dbReference>
<dbReference type="GO" id="GO:0051082">
    <property type="term" value="F:unfolded protein binding"/>
    <property type="evidence" value="ECO:0007669"/>
    <property type="project" value="UniProtKB-UniRule"/>
</dbReference>
<dbReference type="GO" id="GO:0008270">
    <property type="term" value="F:zinc ion binding"/>
    <property type="evidence" value="ECO:0007669"/>
    <property type="project" value="InterPro"/>
</dbReference>
<dbReference type="GO" id="GO:0051301">
    <property type="term" value="P:cell division"/>
    <property type="evidence" value="ECO:0007669"/>
    <property type="project" value="TreeGrafter"/>
</dbReference>
<dbReference type="GO" id="GO:0051603">
    <property type="term" value="P:proteolysis involved in protein catabolic process"/>
    <property type="evidence" value="ECO:0007669"/>
    <property type="project" value="TreeGrafter"/>
</dbReference>
<dbReference type="CDD" id="cd19497">
    <property type="entry name" value="RecA-like_ClpX"/>
    <property type="match status" value="1"/>
</dbReference>
<dbReference type="FunFam" id="1.10.8.60:FF:000002">
    <property type="entry name" value="ATP-dependent Clp protease ATP-binding subunit ClpX"/>
    <property type="match status" value="1"/>
</dbReference>
<dbReference type="FunFam" id="3.40.50.300:FF:000005">
    <property type="entry name" value="ATP-dependent Clp protease ATP-binding subunit ClpX"/>
    <property type="match status" value="1"/>
</dbReference>
<dbReference type="Gene3D" id="1.10.8.60">
    <property type="match status" value="1"/>
</dbReference>
<dbReference type="Gene3D" id="6.20.220.10">
    <property type="entry name" value="ClpX chaperone, C4-type zinc finger domain"/>
    <property type="match status" value="1"/>
</dbReference>
<dbReference type="Gene3D" id="3.40.50.300">
    <property type="entry name" value="P-loop containing nucleotide triphosphate hydrolases"/>
    <property type="match status" value="1"/>
</dbReference>
<dbReference type="HAMAP" id="MF_00175">
    <property type="entry name" value="ClpX"/>
    <property type="match status" value="1"/>
</dbReference>
<dbReference type="InterPro" id="IPR003593">
    <property type="entry name" value="AAA+_ATPase"/>
</dbReference>
<dbReference type="InterPro" id="IPR050052">
    <property type="entry name" value="ATP-dep_Clp_protease_ClpX"/>
</dbReference>
<dbReference type="InterPro" id="IPR003959">
    <property type="entry name" value="ATPase_AAA_core"/>
</dbReference>
<dbReference type="InterPro" id="IPR019489">
    <property type="entry name" value="Clp_ATPase_C"/>
</dbReference>
<dbReference type="InterPro" id="IPR004487">
    <property type="entry name" value="Clp_protease_ATP-bd_su_ClpX"/>
</dbReference>
<dbReference type="InterPro" id="IPR046425">
    <property type="entry name" value="ClpX_bact"/>
</dbReference>
<dbReference type="InterPro" id="IPR027417">
    <property type="entry name" value="P-loop_NTPase"/>
</dbReference>
<dbReference type="InterPro" id="IPR010603">
    <property type="entry name" value="Znf_CppX_C4"/>
</dbReference>
<dbReference type="InterPro" id="IPR038366">
    <property type="entry name" value="Znf_CppX_C4_sf"/>
</dbReference>
<dbReference type="NCBIfam" id="TIGR00382">
    <property type="entry name" value="clpX"/>
    <property type="match status" value="1"/>
</dbReference>
<dbReference type="NCBIfam" id="NF003745">
    <property type="entry name" value="PRK05342.1"/>
    <property type="match status" value="1"/>
</dbReference>
<dbReference type="PANTHER" id="PTHR48102:SF7">
    <property type="entry name" value="ATP-DEPENDENT CLP PROTEASE ATP-BINDING SUBUNIT CLPX-LIKE, MITOCHONDRIAL"/>
    <property type="match status" value="1"/>
</dbReference>
<dbReference type="PANTHER" id="PTHR48102">
    <property type="entry name" value="ATP-DEPENDENT CLP PROTEASE ATP-BINDING SUBUNIT CLPX-LIKE, MITOCHONDRIAL-RELATED"/>
    <property type="match status" value="1"/>
</dbReference>
<dbReference type="Pfam" id="PF07724">
    <property type="entry name" value="AAA_2"/>
    <property type="match status" value="1"/>
</dbReference>
<dbReference type="Pfam" id="PF10431">
    <property type="entry name" value="ClpB_D2-small"/>
    <property type="match status" value="1"/>
</dbReference>
<dbReference type="Pfam" id="PF06689">
    <property type="entry name" value="zf-C4_ClpX"/>
    <property type="match status" value="1"/>
</dbReference>
<dbReference type="SMART" id="SM00382">
    <property type="entry name" value="AAA"/>
    <property type="match status" value="1"/>
</dbReference>
<dbReference type="SMART" id="SM01086">
    <property type="entry name" value="ClpB_D2-small"/>
    <property type="match status" value="1"/>
</dbReference>
<dbReference type="SMART" id="SM00994">
    <property type="entry name" value="zf-C4_ClpX"/>
    <property type="match status" value="1"/>
</dbReference>
<dbReference type="SUPFAM" id="SSF57716">
    <property type="entry name" value="Glucocorticoid receptor-like (DNA-binding domain)"/>
    <property type="match status" value="1"/>
</dbReference>
<dbReference type="SUPFAM" id="SSF52540">
    <property type="entry name" value="P-loop containing nucleoside triphosphate hydrolases"/>
    <property type="match status" value="1"/>
</dbReference>
<dbReference type="PROSITE" id="PS51902">
    <property type="entry name" value="CLPX_ZB"/>
    <property type="match status" value="1"/>
</dbReference>
<gene>
    <name evidence="1" type="primary">clpX</name>
    <name type="ordered locus">HCH_02160</name>
</gene>
<organism>
    <name type="scientific">Hahella chejuensis (strain KCTC 2396)</name>
    <dbReference type="NCBI Taxonomy" id="349521"/>
    <lineage>
        <taxon>Bacteria</taxon>
        <taxon>Pseudomonadati</taxon>
        <taxon>Pseudomonadota</taxon>
        <taxon>Gammaproteobacteria</taxon>
        <taxon>Oceanospirillales</taxon>
        <taxon>Hahellaceae</taxon>
        <taxon>Hahella</taxon>
    </lineage>
</organism>
<feature type="chain" id="PRO_1000024565" description="ATP-dependent Clp protease ATP-binding subunit ClpX">
    <location>
        <begin position="1"/>
        <end position="427"/>
    </location>
</feature>
<feature type="domain" description="ClpX-type ZB" evidence="2">
    <location>
        <begin position="6"/>
        <end position="59"/>
    </location>
</feature>
<feature type="binding site" evidence="2">
    <location>
        <position position="18"/>
    </location>
    <ligand>
        <name>Zn(2+)</name>
        <dbReference type="ChEBI" id="CHEBI:29105"/>
    </ligand>
</feature>
<feature type="binding site" evidence="2">
    <location>
        <position position="21"/>
    </location>
    <ligand>
        <name>Zn(2+)</name>
        <dbReference type="ChEBI" id="CHEBI:29105"/>
    </ligand>
</feature>
<feature type="binding site" evidence="2">
    <location>
        <position position="40"/>
    </location>
    <ligand>
        <name>Zn(2+)</name>
        <dbReference type="ChEBI" id="CHEBI:29105"/>
    </ligand>
</feature>
<feature type="binding site" evidence="2">
    <location>
        <position position="43"/>
    </location>
    <ligand>
        <name>Zn(2+)</name>
        <dbReference type="ChEBI" id="CHEBI:29105"/>
    </ligand>
</feature>
<feature type="binding site" evidence="1">
    <location>
        <begin position="123"/>
        <end position="130"/>
    </location>
    <ligand>
        <name>ATP</name>
        <dbReference type="ChEBI" id="CHEBI:30616"/>
    </ligand>
</feature>
<proteinExistence type="inferred from homology"/>
<sequence length="427" mass="47030">MADERSGKGEDSGKLLYCSFCGKSQHEVRKLIAGPSVFICDECVDLCNDIIREEIQEATTSDSSDRLPTPHEIKETLDDYVIGQTRAKLALAVAVYNHYKRLRYEDKKGEVELGKSNILLIGPTGSGKTLLAETLARLLNVPFTIADATTLTEAGYVGEDVENIIQKLLQKCDYDVEKAQKGIVYIDEIDKISRKSDNPSITRDVSGEGVQQALLKLIEGTVASVPPQGGRKHPQQEFLQVDTSNILFICGGAFAGLEKIIRDRAEKGSIGFSAVVKSQLSSKSVGETLKDVETEDLIKFGLIPEFVGRLPVIATLDELDEAALIQILTQPRNALTKQYSKLFEMESVEVDFREDALRSIAKKAMERKTGARGLRSILEQVLLKTMYDIPSEQDVCKVVIDEGVIAGESEPIKIYKNSEQAKLAADE</sequence>
<name>CLPX_HAHCH</name>
<accession>Q2SK35</accession>
<keyword id="KW-0067">ATP-binding</keyword>
<keyword id="KW-0143">Chaperone</keyword>
<keyword id="KW-0479">Metal-binding</keyword>
<keyword id="KW-0547">Nucleotide-binding</keyword>
<keyword id="KW-1185">Reference proteome</keyword>
<keyword id="KW-0862">Zinc</keyword>
<comment type="function">
    <text evidence="1">ATP-dependent specificity component of the Clp protease. It directs the protease to specific substrates. Can perform chaperone functions in the absence of ClpP.</text>
</comment>
<comment type="subunit">
    <text evidence="1">Component of the ClpX-ClpP complex. Forms a hexameric ring that, in the presence of ATP, binds to fourteen ClpP subunits assembled into a disk-like structure with a central cavity, resembling the structure of eukaryotic proteasomes.</text>
</comment>
<comment type="similarity">
    <text evidence="1">Belongs to the ClpX chaperone family.</text>
</comment>
<evidence type="ECO:0000255" key="1">
    <source>
        <dbReference type="HAMAP-Rule" id="MF_00175"/>
    </source>
</evidence>
<evidence type="ECO:0000255" key="2">
    <source>
        <dbReference type="PROSITE-ProRule" id="PRU01250"/>
    </source>
</evidence>